<keyword id="KW-0009">Actin-binding</keyword>
<keyword id="KW-0020">Allergen</keyword>
<keyword id="KW-0963">Cytoplasm</keyword>
<keyword id="KW-0206">Cytoskeleton</keyword>
<evidence type="ECO:0000250" key="1"/>
<evidence type="ECO:0000305" key="2"/>
<reference key="1">
    <citation type="submission" date="1999-02" db="EMBL/GenBank/DDBJ databases">
        <title>Characterization of profilin from apple as the allergen Mal d 4.</title>
        <authorList>
            <person name="Scheurer S."/>
            <person name="Wangorsch A."/>
            <person name="Haustein D."/>
            <person name="Vieths S."/>
        </authorList>
    </citation>
    <scope>NUCLEOTIDE SEQUENCE [MRNA]</scope>
    <source>
        <strain>cv. Golden Delicious</strain>
    </source>
</reference>
<sequence length="131" mass="14052">MSWQAYVDDHLMCEIEGNHLSAAAIIGHNGSVWAQSATFPQLKPEEVTGIMNDFNEPGSLAPTGLYLGGTKYMVIQGEPGVVIRGKKGPGGVTVKKSTMALLIGIYDEPMTPGQCNMVVERLGDYLIEQGL</sequence>
<accession>Q9XF41</accession>
<organism>
    <name type="scientific">Malus domestica</name>
    <name type="common">Apple</name>
    <name type="synonym">Pyrus malus</name>
    <dbReference type="NCBI Taxonomy" id="3750"/>
    <lineage>
        <taxon>Eukaryota</taxon>
        <taxon>Viridiplantae</taxon>
        <taxon>Streptophyta</taxon>
        <taxon>Embryophyta</taxon>
        <taxon>Tracheophyta</taxon>
        <taxon>Spermatophyta</taxon>
        <taxon>Magnoliopsida</taxon>
        <taxon>eudicotyledons</taxon>
        <taxon>Gunneridae</taxon>
        <taxon>Pentapetalae</taxon>
        <taxon>rosids</taxon>
        <taxon>fabids</taxon>
        <taxon>Rosales</taxon>
        <taxon>Rosaceae</taxon>
        <taxon>Amygdaloideae</taxon>
        <taxon>Maleae</taxon>
        <taxon>Malus</taxon>
    </lineage>
</organism>
<name>PROF2_MALDO</name>
<protein>
    <recommendedName>
        <fullName>Profilin-2</fullName>
    </recommendedName>
    <alternativeName>
        <fullName>GD4-2</fullName>
    </alternativeName>
    <alternativeName>
        <fullName>Pollen allergen Mal d 4.0201</fullName>
    </alternativeName>
    <allergenName>Mal d 4.0201</allergenName>
</protein>
<dbReference type="EMBL" id="AF129427">
    <property type="protein sequence ID" value="AAD29413.1"/>
    <property type="molecule type" value="mRNA"/>
</dbReference>
<dbReference type="SMR" id="Q9XF41"/>
<dbReference type="Allergome" id="2416">
    <property type="allergen name" value="Mal d 4.0201"/>
</dbReference>
<dbReference type="Allergome" id="796">
    <property type="allergen name" value="Mal d 4"/>
</dbReference>
<dbReference type="GO" id="GO:0005938">
    <property type="term" value="C:cell cortex"/>
    <property type="evidence" value="ECO:0007669"/>
    <property type="project" value="TreeGrafter"/>
</dbReference>
<dbReference type="GO" id="GO:0005856">
    <property type="term" value="C:cytoskeleton"/>
    <property type="evidence" value="ECO:0007669"/>
    <property type="project" value="UniProtKB-SubCell"/>
</dbReference>
<dbReference type="GO" id="GO:0003785">
    <property type="term" value="F:actin monomer binding"/>
    <property type="evidence" value="ECO:0007669"/>
    <property type="project" value="TreeGrafter"/>
</dbReference>
<dbReference type="CDD" id="cd00148">
    <property type="entry name" value="PROF"/>
    <property type="match status" value="1"/>
</dbReference>
<dbReference type="FunFam" id="3.30.450.30:FF:000001">
    <property type="entry name" value="Profilin"/>
    <property type="match status" value="1"/>
</dbReference>
<dbReference type="Gene3D" id="3.30.450.30">
    <property type="entry name" value="Dynein light chain 2a, cytoplasmic"/>
    <property type="match status" value="1"/>
</dbReference>
<dbReference type="InterPro" id="IPR048278">
    <property type="entry name" value="PFN"/>
</dbReference>
<dbReference type="InterPro" id="IPR005455">
    <property type="entry name" value="PFN_euk"/>
</dbReference>
<dbReference type="InterPro" id="IPR036140">
    <property type="entry name" value="PFN_sf"/>
</dbReference>
<dbReference type="InterPro" id="IPR027310">
    <property type="entry name" value="Profilin_CS"/>
</dbReference>
<dbReference type="PANTHER" id="PTHR11604">
    <property type="entry name" value="PROFILIN"/>
    <property type="match status" value="1"/>
</dbReference>
<dbReference type="PANTHER" id="PTHR11604:SF49">
    <property type="entry name" value="PROFILIN-2"/>
    <property type="match status" value="1"/>
</dbReference>
<dbReference type="Pfam" id="PF00235">
    <property type="entry name" value="Profilin"/>
    <property type="match status" value="1"/>
</dbReference>
<dbReference type="PRINTS" id="PR00392">
    <property type="entry name" value="PROFILIN"/>
</dbReference>
<dbReference type="PRINTS" id="PR01640">
    <property type="entry name" value="PROFILINPLNT"/>
</dbReference>
<dbReference type="SMART" id="SM00392">
    <property type="entry name" value="PROF"/>
    <property type="match status" value="1"/>
</dbReference>
<dbReference type="SUPFAM" id="SSF55770">
    <property type="entry name" value="Profilin (actin-binding protein)"/>
    <property type="match status" value="1"/>
</dbReference>
<dbReference type="PROSITE" id="PS00414">
    <property type="entry name" value="PROFILIN"/>
    <property type="match status" value="1"/>
</dbReference>
<feature type="initiator methionine" description="Removed" evidence="1">
    <location>
        <position position="1"/>
    </location>
</feature>
<feature type="chain" id="PRO_0000199652" description="Profilin-2">
    <location>
        <begin position="2"/>
        <end position="131"/>
    </location>
</feature>
<proteinExistence type="evidence at protein level"/>
<comment type="function">
    <text evidence="1">Binds to actin and affects the structure of the cytoskeleton. At high concentrations, profilin prevents the polymerization of actin, whereas it enhances it at low concentrations. By binding to PIP2, it inhibits the formation of IP3 and DG (By similarity).</text>
</comment>
<comment type="subunit">
    <text>Occurs in many kinds of cells as a complex with monomeric actin in a 1:1 ratio.</text>
</comment>
<comment type="subcellular location">
    <subcellularLocation>
        <location evidence="1">Cytoplasm</location>
        <location evidence="1">Cytoskeleton</location>
    </subcellularLocation>
</comment>
<comment type="allergen">
    <text>Causes an allergic reaction in human.</text>
</comment>
<comment type="similarity">
    <text evidence="2">Belongs to the profilin family.</text>
</comment>